<name>PYRE_HELAH</name>
<evidence type="ECO:0000255" key="1">
    <source>
        <dbReference type="HAMAP-Rule" id="MF_01208"/>
    </source>
</evidence>
<dbReference type="EC" id="2.4.2.10" evidence="1"/>
<dbReference type="EMBL" id="AM260522">
    <property type="protein sequence ID" value="CAJ99077.1"/>
    <property type="molecule type" value="Genomic_DNA"/>
</dbReference>
<dbReference type="RefSeq" id="WP_011577192.1">
    <property type="nucleotide sequence ID" value="NC_008229.1"/>
</dbReference>
<dbReference type="SMR" id="Q17Z49"/>
<dbReference type="STRING" id="382638.Hac_0228"/>
<dbReference type="GeneID" id="31757750"/>
<dbReference type="KEGG" id="hac:Hac_0228"/>
<dbReference type="eggNOG" id="COG0461">
    <property type="taxonomic scope" value="Bacteria"/>
</dbReference>
<dbReference type="HOGENOM" id="CLU_074878_3_0_7"/>
<dbReference type="OrthoDB" id="9783570at2"/>
<dbReference type="BioCyc" id="HACI382638:HAC_RS01020-MONOMER"/>
<dbReference type="UniPathway" id="UPA00070">
    <property type="reaction ID" value="UER00119"/>
</dbReference>
<dbReference type="Proteomes" id="UP000000775">
    <property type="component" value="Chromosome"/>
</dbReference>
<dbReference type="GO" id="GO:0000287">
    <property type="term" value="F:magnesium ion binding"/>
    <property type="evidence" value="ECO:0007669"/>
    <property type="project" value="UniProtKB-UniRule"/>
</dbReference>
<dbReference type="GO" id="GO:0004588">
    <property type="term" value="F:orotate phosphoribosyltransferase activity"/>
    <property type="evidence" value="ECO:0007669"/>
    <property type="project" value="UniProtKB-UniRule"/>
</dbReference>
<dbReference type="GO" id="GO:0044205">
    <property type="term" value="P:'de novo' UMP biosynthetic process"/>
    <property type="evidence" value="ECO:0007669"/>
    <property type="project" value="UniProtKB-UniRule"/>
</dbReference>
<dbReference type="GO" id="GO:0019856">
    <property type="term" value="P:pyrimidine nucleobase biosynthetic process"/>
    <property type="evidence" value="ECO:0007669"/>
    <property type="project" value="InterPro"/>
</dbReference>
<dbReference type="CDD" id="cd06223">
    <property type="entry name" value="PRTases_typeI"/>
    <property type="match status" value="1"/>
</dbReference>
<dbReference type="Gene3D" id="3.40.50.2020">
    <property type="match status" value="1"/>
</dbReference>
<dbReference type="HAMAP" id="MF_01208">
    <property type="entry name" value="PyrE"/>
    <property type="match status" value="1"/>
</dbReference>
<dbReference type="InterPro" id="IPR023031">
    <property type="entry name" value="OPRT"/>
</dbReference>
<dbReference type="InterPro" id="IPR006273">
    <property type="entry name" value="Orotate_PRibTrfase_bac"/>
</dbReference>
<dbReference type="InterPro" id="IPR000836">
    <property type="entry name" value="PRibTrfase_dom"/>
</dbReference>
<dbReference type="InterPro" id="IPR029057">
    <property type="entry name" value="PRTase-like"/>
</dbReference>
<dbReference type="NCBIfam" id="TIGR01367">
    <property type="entry name" value="pyrE_Therm"/>
    <property type="match status" value="1"/>
</dbReference>
<dbReference type="PANTHER" id="PTHR19278">
    <property type="entry name" value="OROTATE PHOSPHORIBOSYLTRANSFERASE"/>
    <property type="match status" value="1"/>
</dbReference>
<dbReference type="PANTHER" id="PTHR19278:SF9">
    <property type="entry name" value="URIDINE 5'-MONOPHOSPHATE SYNTHASE"/>
    <property type="match status" value="1"/>
</dbReference>
<dbReference type="Pfam" id="PF00156">
    <property type="entry name" value="Pribosyltran"/>
    <property type="match status" value="1"/>
</dbReference>
<dbReference type="SUPFAM" id="SSF53271">
    <property type="entry name" value="PRTase-like"/>
    <property type="match status" value="1"/>
</dbReference>
<dbReference type="PROSITE" id="PS00103">
    <property type="entry name" value="PUR_PYR_PR_TRANSFER"/>
    <property type="match status" value="1"/>
</dbReference>
<reference key="1">
    <citation type="journal article" date="2006" name="PLoS Genet.">
        <title>Who ate whom? Adaptive Helicobacter genomic changes that accompanied a host jump from early humans to large felines.</title>
        <authorList>
            <person name="Eppinger M."/>
            <person name="Baar C."/>
            <person name="Linz B."/>
            <person name="Raddatz G."/>
            <person name="Lanz C."/>
            <person name="Keller H."/>
            <person name="Morelli G."/>
            <person name="Gressmann H."/>
            <person name="Achtman M."/>
            <person name="Schuster S.C."/>
        </authorList>
    </citation>
    <scope>NUCLEOTIDE SEQUENCE [LARGE SCALE GENOMIC DNA]</scope>
    <source>
        <strain>Sheeba</strain>
    </source>
</reference>
<gene>
    <name evidence="1" type="primary">pyrE</name>
    <name type="ordered locus">Hac_0228</name>
</gene>
<feature type="chain" id="PRO_1000066238" description="Orotate phosphoribosyltransferase">
    <location>
        <begin position="1"/>
        <end position="201"/>
    </location>
</feature>
<feature type="binding site" evidence="1">
    <location>
        <begin position="113"/>
        <end position="121"/>
    </location>
    <ligand>
        <name>5-phospho-alpha-D-ribose 1-diphosphate</name>
        <dbReference type="ChEBI" id="CHEBI:58017"/>
    </ligand>
</feature>
<feature type="binding site" evidence="1">
    <location>
        <position position="117"/>
    </location>
    <ligand>
        <name>orotate</name>
        <dbReference type="ChEBI" id="CHEBI:30839"/>
    </ligand>
</feature>
<feature type="binding site" evidence="1">
    <location>
        <position position="145"/>
    </location>
    <ligand>
        <name>orotate</name>
        <dbReference type="ChEBI" id="CHEBI:30839"/>
    </ligand>
</feature>
<organism>
    <name type="scientific">Helicobacter acinonychis (strain Sheeba)</name>
    <dbReference type="NCBI Taxonomy" id="382638"/>
    <lineage>
        <taxon>Bacteria</taxon>
        <taxon>Pseudomonadati</taxon>
        <taxon>Campylobacterota</taxon>
        <taxon>Epsilonproteobacteria</taxon>
        <taxon>Campylobacterales</taxon>
        <taxon>Helicobacteraceae</taxon>
        <taxon>Helicobacter</taxon>
    </lineage>
</organism>
<keyword id="KW-0328">Glycosyltransferase</keyword>
<keyword id="KW-0460">Magnesium</keyword>
<keyword id="KW-0665">Pyrimidine biosynthesis</keyword>
<keyword id="KW-0808">Transferase</keyword>
<comment type="function">
    <text evidence="1">Catalyzes the transfer of a ribosyl phosphate group from 5-phosphoribose 1-diphosphate to orotate, leading to the formation of orotidine monophosphate (OMP).</text>
</comment>
<comment type="catalytic activity">
    <reaction evidence="1">
        <text>orotidine 5'-phosphate + diphosphate = orotate + 5-phospho-alpha-D-ribose 1-diphosphate</text>
        <dbReference type="Rhea" id="RHEA:10380"/>
        <dbReference type="ChEBI" id="CHEBI:30839"/>
        <dbReference type="ChEBI" id="CHEBI:33019"/>
        <dbReference type="ChEBI" id="CHEBI:57538"/>
        <dbReference type="ChEBI" id="CHEBI:58017"/>
        <dbReference type="EC" id="2.4.2.10"/>
    </reaction>
</comment>
<comment type="cofactor">
    <cofactor evidence="1">
        <name>Mg(2+)</name>
        <dbReference type="ChEBI" id="CHEBI:18420"/>
    </cofactor>
</comment>
<comment type="pathway">
    <text evidence="1">Pyrimidine metabolism; UMP biosynthesis via de novo pathway; UMP from orotate: step 1/2.</text>
</comment>
<comment type="subunit">
    <text evidence="1">Homodimer.</text>
</comment>
<comment type="similarity">
    <text evidence="1">Belongs to the purine/pyrimidine phosphoribosyltransferase family. PyrE subfamily.</text>
</comment>
<accession>Q17Z49</accession>
<protein>
    <recommendedName>
        <fullName evidence="1">Orotate phosphoribosyltransferase</fullName>
        <shortName evidence="1">OPRT</shortName>
        <shortName evidence="1">OPRTase</shortName>
        <ecNumber evidence="1">2.4.2.10</ecNumber>
    </recommendedName>
</protein>
<proteinExistence type="inferred from homology"/>
<sequence>MDVKACYQNAKALLEGHFLLSSGFHSNYYLQSAKVLENPKLAEQLALELAKQIQNARLNIECVCSPAIGGILAGYELARALGVRFIFTERVNGVMALRRGFEVKPNEKILVCEDIITTGKSAMECAKVLEEKGAHIVAFAALANRGICKRTHSSLKAQEDACLPSELPLFALEDFVFDMHEPKHCPLCTTSVAIKPGSRGN</sequence>